<keyword id="KW-0010">Activator</keyword>
<keyword id="KW-0238">DNA-binding</keyword>
<keyword id="KW-0312">Gluconeogenesis</keyword>
<keyword id="KW-0479">Metal-binding</keyword>
<keyword id="KW-0539">Nucleus</keyword>
<keyword id="KW-0804">Transcription</keyword>
<keyword id="KW-0805">Transcription regulation</keyword>
<keyword id="KW-0862">Zinc</keyword>
<organism>
    <name type="scientific">Aspergillus fumigatus (strain CBS 144.89 / FGSC A1163 / CEA10)</name>
    <name type="common">Neosartorya fumigata</name>
    <dbReference type="NCBI Taxonomy" id="451804"/>
    <lineage>
        <taxon>Eukaryota</taxon>
        <taxon>Fungi</taxon>
        <taxon>Dikarya</taxon>
        <taxon>Ascomycota</taxon>
        <taxon>Pezizomycotina</taxon>
        <taxon>Eurotiomycetes</taxon>
        <taxon>Eurotiomycetidae</taxon>
        <taxon>Eurotiales</taxon>
        <taxon>Aspergillaceae</taxon>
        <taxon>Aspergillus</taxon>
        <taxon>Aspergillus subgen. Fumigati</taxon>
    </lineage>
</organism>
<reference key="1">
    <citation type="journal article" date="2008" name="PLoS Genet.">
        <title>Genomic islands in the pathogenic filamentous fungus Aspergillus fumigatus.</title>
        <authorList>
            <person name="Fedorova N.D."/>
            <person name="Khaldi N."/>
            <person name="Joardar V.S."/>
            <person name="Maiti R."/>
            <person name="Amedeo P."/>
            <person name="Anderson M.J."/>
            <person name="Crabtree J."/>
            <person name="Silva J.C."/>
            <person name="Badger J.H."/>
            <person name="Albarraq A."/>
            <person name="Angiuoli S."/>
            <person name="Bussey H."/>
            <person name="Bowyer P."/>
            <person name="Cotty P.J."/>
            <person name="Dyer P.S."/>
            <person name="Egan A."/>
            <person name="Galens K."/>
            <person name="Fraser-Liggett C.M."/>
            <person name="Haas B.J."/>
            <person name="Inman J.M."/>
            <person name="Kent R."/>
            <person name="Lemieux S."/>
            <person name="Malavazi I."/>
            <person name="Orvis J."/>
            <person name="Roemer T."/>
            <person name="Ronning C.M."/>
            <person name="Sundaram J.P."/>
            <person name="Sutton G."/>
            <person name="Turner G."/>
            <person name="Venter J.C."/>
            <person name="White O.R."/>
            <person name="Whitty B.R."/>
            <person name="Youngman P."/>
            <person name="Wolfe K.H."/>
            <person name="Goldman G.H."/>
            <person name="Wortman J.R."/>
            <person name="Jiang B."/>
            <person name="Denning D.W."/>
            <person name="Nierman W.C."/>
        </authorList>
    </citation>
    <scope>NUCLEOTIDE SEQUENCE [LARGE SCALE GENOMIC DNA]</scope>
    <source>
        <strain>CBS 144.89 / FGSC A1163 / CEA10</strain>
    </source>
</reference>
<feature type="chain" id="PRO_0000406431" description="Transcription activator of gluconeogenesis acuK">
    <location>
        <begin position="1"/>
        <end position="683"/>
    </location>
</feature>
<feature type="DNA-binding region" description="Zn(2)-C6 fungal-type" evidence="2">
    <location>
        <begin position="65"/>
        <end position="93"/>
    </location>
</feature>
<feature type="region of interest" description="Disordered" evidence="3">
    <location>
        <begin position="1"/>
        <end position="58"/>
    </location>
</feature>
<feature type="region of interest" description="Disordered" evidence="3">
    <location>
        <begin position="131"/>
        <end position="224"/>
    </location>
</feature>
<feature type="region of interest" description="Disordered" evidence="3">
    <location>
        <begin position="261"/>
        <end position="328"/>
    </location>
</feature>
<feature type="region of interest" description="Disordered" evidence="3">
    <location>
        <begin position="351"/>
        <end position="418"/>
    </location>
</feature>
<feature type="region of interest" description="Disordered" evidence="3">
    <location>
        <begin position="537"/>
        <end position="569"/>
    </location>
</feature>
<feature type="compositionally biased region" description="Low complexity" evidence="3">
    <location>
        <begin position="134"/>
        <end position="150"/>
    </location>
</feature>
<feature type="compositionally biased region" description="Polar residues" evidence="3">
    <location>
        <begin position="151"/>
        <end position="218"/>
    </location>
</feature>
<feature type="compositionally biased region" description="Polar residues" evidence="3">
    <location>
        <begin position="264"/>
        <end position="287"/>
    </location>
</feature>
<feature type="compositionally biased region" description="Polar residues" evidence="3">
    <location>
        <begin position="314"/>
        <end position="325"/>
    </location>
</feature>
<feature type="compositionally biased region" description="Low complexity" evidence="3">
    <location>
        <begin position="352"/>
        <end position="366"/>
    </location>
</feature>
<feature type="compositionally biased region" description="Polar residues" evidence="3">
    <location>
        <begin position="376"/>
        <end position="408"/>
    </location>
</feature>
<feature type="compositionally biased region" description="Polar residues" evidence="3">
    <location>
        <begin position="537"/>
        <end position="565"/>
    </location>
</feature>
<accession>B0XVV1</accession>
<gene>
    <name type="primary">acuK</name>
    <name type="ORF">AFUB_022860</name>
</gene>
<sequence length="683" mass="74093">MKTEVNGSAPALAGDHGGVDQDTPDAGDRTEQAKHKTNGATENAPKSANAKDPSRPRRKKARRACFACQRAHLTCGDERPCQRCIKRGLQDACHDGVRKKAKYLHDAPDGALMPGVGGNFYNNAMRNNMPLSRNGTTTVNTTTQQNSGSNYYPTPQSNSYNVYQDTPLTQNSFPSQSPVSPTFNMKTTPTARSNSLSSSVNQQPPSTTVSGATQSQNPFAGPFFDPSDPALFNFDLSSMNFENRYGALEFGMLGHMATGAGDSPTDSATQRGSIGRSGSTQYSTTPLTGAPGFGESPGNQQPFLFGNDPLLNEWPNSQAPNQGHLNVSGVYPQGGMMHMAKSDAPHAFAIESGPASFSSPSATTSPHINSGHDESSLSNAAVNKSTGLTANGQRPAITTPSLKHQSLQFGVKRRQRNPSTVYESVKEPYAYTNRFHNLTAFIQRRFSPQKTLQIAKALASIRPSFIATTKTLNRDDLIFMEKCFQRTLWEYEDFINACGTPTIVCRRTGEIAAVGKEFSILTGWKKDVLLGKEPNLNVNTGGSSAPGSGNTSRGSFTPRSSTLETATPGRPQPVFLAELLDDDSVVEFYEDFARLAFGDSRGSVMTTCKLLKYKTKEDMELAQSDDNQRWNNHLRKGGIAGEAGMNQLGFKDGKVECAYCWTVKRDVFDIPMLIVMNVFLPCI</sequence>
<name>ACUK_ASPFC</name>
<protein>
    <recommendedName>
        <fullName>Transcription activator of gluconeogenesis acuK</fullName>
    </recommendedName>
</protein>
<dbReference type="EMBL" id="DS499595">
    <property type="protein sequence ID" value="EDP54234.1"/>
    <property type="status" value="ALT_SEQ"/>
    <property type="molecule type" value="Genomic_DNA"/>
</dbReference>
<dbReference type="SMR" id="B0XVV1"/>
<dbReference type="OrthoDB" id="80574at5052"/>
<dbReference type="Proteomes" id="UP000001699">
    <property type="component" value="Unassembled WGS sequence"/>
</dbReference>
<dbReference type="GO" id="GO:0005634">
    <property type="term" value="C:nucleus"/>
    <property type="evidence" value="ECO:0007669"/>
    <property type="project" value="UniProtKB-SubCell"/>
</dbReference>
<dbReference type="GO" id="GO:0000981">
    <property type="term" value="F:DNA-binding transcription factor activity, RNA polymerase II-specific"/>
    <property type="evidence" value="ECO:0007669"/>
    <property type="project" value="InterPro"/>
</dbReference>
<dbReference type="GO" id="GO:0000977">
    <property type="term" value="F:RNA polymerase II transcription regulatory region sequence-specific DNA binding"/>
    <property type="evidence" value="ECO:0007669"/>
    <property type="project" value="TreeGrafter"/>
</dbReference>
<dbReference type="GO" id="GO:0008270">
    <property type="term" value="F:zinc ion binding"/>
    <property type="evidence" value="ECO:0007669"/>
    <property type="project" value="InterPro"/>
</dbReference>
<dbReference type="GO" id="GO:0009267">
    <property type="term" value="P:cellular response to starvation"/>
    <property type="evidence" value="ECO:0007669"/>
    <property type="project" value="TreeGrafter"/>
</dbReference>
<dbReference type="GO" id="GO:0006094">
    <property type="term" value="P:gluconeogenesis"/>
    <property type="evidence" value="ECO:0007669"/>
    <property type="project" value="UniProtKB-KW"/>
</dbReference>
<dbReference type="CDD" id="cd00067">
    <property type="entry name" value="GAL4"/>
    <property type="match status" value="1"/>
</dbReference>
<dbReference type="Gene3D" id="4.10.240.10">
    <property type="entry name" value="Zn(2)-C6 fungal-type DNA-binding domain"/>
    <property type="match status" value="1"/>
</dbReference>
<dbReference type="InterPro" id="IPR050335">
    <property type="entry name" value="ERT1_acuK_gluconeogen_tf"/>
</dbReference>
<dbReference type="InterPro" id="IPR056751">
    <property type="entry name" value="PAS_13"/>
</dbReference>
<dbReference type="InterPro" id="IPR036864">
    <property type="entry name" value="Zn2-C6_fun-type_DNA-bd_sf"/>
</dbReference>
<dbReference type="InterPro" id="IPR001138">
    <property type="entry name" value="Zn2Cys6_DnaBD"/>
</dbReference>
<dbReference type="PANTHER" id="PTHR47659:SF1">
    <property type="entry name" value="TRANSCRIPTION ACTIVATOR OF GLUCONEOGENESIS ERT1"/>
    <property type="match status" value="1"/>
</dbReference>
<dbReference type="PANTHER" id="PTHR47659">
    <property type="entry name" value="ZN(II)2CYS6 TRANSCRIPTION FACTOR (EUROFUNG)-RELATED"/>
    <property type="match status" value="1"/>
</dbReference>
<dbReference type="Pfam" id="PF24990">
    <property type="entry name" value="PAS_13"/>
    <property type="match status" value="1"/>
</dbReference>
<dbReference type="SMART" id="SM00066">
    <property type="entry name" value="GAL4"/>
    <property type="match status" value="1"/>
</dbReference>
<dbReference type="SUPFAM" id="SSF57701">
    <property type="entry name" value="Zn2/Cys6 DNA-binding domain"/>
    <property type="match status" value="1"/>
</dbReference>
<dbReference type="PROSITE" id="PS50048">
    <property type="entry name" value="ZN2_CY6_FUNGAL_2"/>
    <property type="match status" value="1"/>
</dbReference>
<comment type="function">
    <text evidence="1">Transcription factor which regulates nonfermentable carbon utilization. Activator of gluconeogenetic genes (By similarity).</text>
</comment>
<comment type="subcellular location">
    <subcellularLocation>
        <location evidence="2">Nucleus</location>
    </subcellularLocation>
</comment>
<comment type="similarity">
    <text evidence="4">Belongs to the ERT1/acuK family.</text>
</comment>
<comment type="sequence caution" evidence="4">
    <conflict type="erroneous gene model prediction">
        <sequence resource="EMBL-CDS" id="EDP54234"/>
    </conflict>
</comment>
<proteinExistence type="inferred from homology"/>
<evidence type="ECO:0000250" key="1"/>
<evidence type="ECO:0000255" key="2">
    <source>
        <dbReference type="PROSITE-ProRule" id="PRU00227"/>
    </source>
</evidence>
<evidence type="ECO:0000256" key="3">
    <source>
        <dbReference type="SAM" id="MobiDB-lite"/>
    </source>
</evidence>
<evidence type="ECO:0000305" key="4"/>